<accession>Q72LI3</accession>
<protein>
    <recommendedName>
        <fullName evidence="1">Putative membrane protein insertion efficiency factor</fullName>
    </recommendedName>
</protein>
<reference key="1">
    <citation type="journal article" date="2004" name="Nat. Biotechnol.">
        <title>The genome sequence of the extreme thermophile Thermus thermophilus.</title>
        <authorList>
            <person name="Henne A."/>
            <person name="Brueggemann H."/>
            <person name="Raasch C."/>
            <person name="Wiezer A."/>
            <person name="Hartsch T."/>
            <person name="Liesegang H."/>
            <person name="Johann A."/>
            <person name="Lienard T."/>
            <person name="Gohl O."/>
            <person name="Martinez-Arias R."/>
            <person name="Jacobi C."/>
            <person name="Starkuviene V."/>
            <person name="Schlenczeck S."/>
            <person name="Dencker S."/>
            <person name="Huber R."/>
            <person name="Klenk H.-P."/>
            <person name="Kramer W."/>
            <person name="Merkl R."/>
            <person name="Gottschalk G."/>
            <person name="Fritz H.-J."/>
        </authorList>
    </citation>
    <scope>NUCLEOTIDE SEQUENCE [LARGE SCALE GENOMIC DNA]</scope>
    <source>
        <strain>ATCC BAA-163 / DSM 7039 / HB27</strain>
    </source>
</reference>
<proteinExistence type="inferred from homology"/>
<dbReference type="EMBL" id="AE017221">
    <property type="protein sequence ID" value="AAS80424.1"/>
    <property type="molecule type" value="Genomic_DNA"/>
</dbReference>
<dbReference type="RefSeq" id="WP_011172533.1">
    <property type="nucleotide sequence ID" value="NC_005835.1"/>
</dbReference>
<dbReference type="GeneID" id="3170061"/>
<dbReference type="KEGG" id="tth:TT_C0076"/>
<dbReference type="eggNOG" id="COG0759">
    <property type="taxonomic scope" value="Bacteria"/>
</dbReference>
<dbReference type="HOGENOM" id="CLU_144811_6_0_0"/>
<dbReference type="OrthoDB" id="9801753at2"/>
<dbReference type="Proteomes" id="UP000000592">
    <property type="component" value="Chromosome"/>
</dbReference>
<dbReference type="GO" id="GO:0005886">
    <property type="term" value="C:plasma membrane"/>
    <property type="evidence" value="ECO:0007669"/>
    <property type="project" value="UniProtKB-SubCell"/>
</dbReference>
<dbReference type="HAMAP" id="MF_00386">
    <property type="entry name" value="UPF0161_YidD"/>
    <property type="match status" value="1"/>
</dbReference>
<dbReference type="InterPro" id="IPR002696">
    <property type="entry name" value="Membr_insert_effic_factor_YidD"/>
</dbReference>
<dbReference type="NCBIfam" id="TIGR00278">
    <property type="entry name" value="membrane protein insertion efficiency factor YidD"/>
    <property type="match status" value="1"/>
</dbReference>
<dbReference type="PANTHER" id="PTHR33383">
    <property type="entry name" value="MEMBRANE PROTEIN INSERTION EFFICIENCY FACTOR-RELATED"/>
    <property type="match status" value="1"/>
</dbReference>
<dbReference type="PANTHER" id="PTHR33383:SF1">
    <property type="entry name" value="MEMBRANE PROTEIN INSERTION EFFICIENCY FACTOR-RELATED"/>
    <property type="match status" value="1"/>
</dbReference>
<dbReference type="Pfam" id="PF01809">
    <property type="entry name" value="YidD"/>
    <property type="match status" value="1"/>
</dbReference>
<dbReference type="SMART" id="SM01234">
    <property type="entry name" value="Haemolytic"/>
    <property type="match status" value="1"/>
</dbReference>
<evidence type="ECO:0000255" key="1">
    <source>
        <dbReference type="HAMAP-Rule" id="MF_00386"/>
    </source>
</evidence>
<keyword id="KW-0997">Cell inner membrane</keyword>
<keyword id="KW-1003">Cell membrane</keyword>
<keyword id="KW-0472">Membrane</keyword>
<comment type="function">
    <text evidence="1">Could be involved in insertion of integral membrane proteins into the membrane.</text>
</comment>
<comment type="subcellular location">
    <subcellularLocation>
        <location evidence="1">Cell inner membrane</location>
        <topology evidence="1">Peripheral membrane protein</topology>
        <orientation evidence="1">Cytoplasmic side</orientation>
    </subcellularLocation>
</comment>
<comment type="similarity">
    <text evidence="1">Belongs to the UPF0161 family.</text>
</comment>
<sequence length="82" mass="9417">MREVLILLIRFYRRFLSPLKPRTCRFHPTCSAYALEALERHGAFWGSYLAVRRVLRCHPWNPGGLDPVPVLFPPGKVRGGAE</sequence>
<organism>
    <name type="scientific">Thermus thermophilus (strain ATCC BAA-163 / DSM 7039 / HB27)</name>
    <dbReference type="NCBI Taxonomy" id="262724"/>
    <lineage>
        <taxon>Bacteria</taxon>
        <taxon>Thermotogati</taxon>
        <taxon>Deinococcota</taxon>
        <taxon>Deinococci</taxon>
        <taxon>Thermales</taxon>
        <taxon>Thermaceae</taxon>
        <taxon>Thermus</taxon>
    </lineage>
</organism>
<name>YIDD_THET2</name>
<feature type="chain" id="PRO_0000253193" description="Putative membrane protein insertion efficiency factor">
    <location>
        <begin position="1"/>
        <end position="82"/>
    </location>
</feature>
<gene>
    <name type="ordered locus">TT_C0076</name>
</gene>